<keyword id="KW-0002">3D-structure</keyword>
<keyword id="KW-0045">Antibiotic biosynthesis</keyword>
<keyword id="KW-0408">Iron</keyword>
<keyword id="KW-0560">Oxidoreductase</keyword>
<reference key="1">
    <citation type="journal article" date="2004" name="Arch. Biochem. Biophys.">
        <title>A gene cluster for biosynthesis of kanamycin from Streptomyces kanamyceticus: comparison with gentamicin biosynthetic gene cluster.</title>
        <authorList>
            <person name="Kharel M.K."/>
            <person name="Subba B."/>
            <person name="Basnet D.B."/>
            <person name="Woo J.S."/>
            <person name="Lee H.C."/>
            <person name="Liou K."/>
            <person name="Sohng J.K."/>
        </authorList>
    </citation>
    <scope>NUCLEOTIDE SEQUENCE [GENOMIC DNA]</scope>
    <source>
        <strain>ATCC 12853 / DSM 40500 / NBRC 13414 / NCIMB 9343 / NRRL B-2535 / VKM Ac-837</strain>
    </source>
</reference>
<reference key="2">
    <citation type="journal article" date="2004" name="J. Antibiot.">
        <title>The kanamycin biosynthetic gene cluster from Streptomyces kanamyceticus.</title>
        <authorList>
            <person name="Yanai K."/>
            <person name="Murakami T."/>
        </authorList>
    </citation>
    <scope>NUCLEOTIDE SEQUENCE [GENOMIC DNA]</scope>
    <source>
        <strain>21-18</strain>
    </source>
</reference>
<reference key="3">
    <citation type="submission" date="2004-02" db="EMBL/GenBank/DDBJ databases">
        <title>Cloning and sequencing of the kanamycin biosynthetic gene cluster from Streptomyces kanamyceticus DSM 40500.</title>
        <authorList>
            <person name="Aboshanab K.M.A."/>
            <person name="Schmidt-Beissner H."/>
            <person name="Wehmeier U.F."/>
            <person name="Welzel K."/>
            <person name="Vente A."/>
            <person name="Piepersberg W."/>
        </authorList>
    </citation>
    <scope>NUCLEOTIDE SEQUENCE [GENOMIC DNA]</scope>
    <source>
        <strain>ATCC 12853 / DSM 40500 / NBRC 13414 / NCIMB 9343 / NRRL B-2535 / VKM Ac-837</strain>
    </source>
</reference>
<reference key="4">
    <citation type="journal article" date="2012" name="Angew. Chem. Int. Ed.">
        <title>The last step of kanamycin biosynthesis: unique deamination reaction catalyzed by the alpha-ketoglutarate-dependent nonheme iron dioxygenase KanJ and the NADPH-dependent reductase KanK.</title>
        <authorList>
            <person name="Sucipto H."/>
            <person name="Kudo F."/>
            <person name="Eguchi T."/>
        </authorList>
    </citation>
    <scope>FUNCTION</scope>
    <scope>CATALYTIC ACTIVITY</scope>
    <scope>COFACTOR</scope>
    <scope>PATHWAY</scope>
    <source>
        <strain>ATCC 12853 / DSM 40500 / NBRC 13414 / NCIMB 9343 / NRRL B-2535 / VKM Ac-837</strain>
    </source>
</reference>
<comment type="function">
    <text evidence="1">Mediates the conversion of kanamycin B into 2'-dehydrokanamycin A during the transformation of kanamycin B to kanamycin A.</text>
</comment>
<comment type="catalytic activity">
    <reaction evidence="1">
        <text>kanamycin B + 2-oxoglutarate + O2 = 2'-dehydrokanamycin A + succinate + NH4(+) + CO2</text>
        <dbReference type="Rhea" id="RHEA:35831"/>
        <dbReference type="ChEBI" id="CHEBI:15379"/>
        <dbReference type="ChEBI" id="CHEBI:16526"/>
        <dbReference type="ChEBI" id="CHEBI:16810"/>
        <dbReference type="ChEBI" id="CHEBI:28938"/>
        <dbReference type="ChEBI" id="CHEBI:30031"/>
        <dbReference type="ChEBI" id="CHEBI:58549"/>
        <dbReference type="ChEBI" id="CHEBI:72757"/>
        <dbReference type="EC" id="1.14.11.37"/>
    </reaction>
</comment>
<comment type="cofactor">
    <cofactor evidence="1">
        <name>Fe cation</name>
        <dbReference type="ChEBI" id="CHEBI:24875"/>
    </cofactor>
</comment>
<comment type="pathway">
    <text evidence="1">Antibiotic biosynthesis; kanamycin biosynthesis.</text>
</comment>
<comment type="similarity">
    <text evidence="2">Belongs to the PhyH family.</text>
</comment>
<feature type="chain" id="PRO_0000424136" description="Kanamycin B dioxygenase">
    <location>
        <begin position="1"/>
        <end position="285"/>
    </location>
</feature>
<feature type="helix" evidence="5">
    <location>
        <begin position="8"/>
        <end position="10"/>
    </location>
</feature>
<feature type="strand" evidence="5">
    <location>
        <begin position="11"/>
        <end position="13"/>
    </location>
</feature>
<feature type="helix" evidence="5">
    <location>
        <begin position="23"/>
        <end position="36"/>
    </location>
</feature>
<feature type="strand" evidence="5">
    <location>
        <begin position="37"/>
        <end position="43"/>
    </location>
</feature>
<feature type="helix" evidence="5">
    <location>
        <begin position="47"/>
        <end position="65"/>
    </location>
</feature>
<feature type="strand" evidence="5">
    <location>
        <begin position="67"/>
        <end position="69"/>
    </location>
</feature>
<feature type="strand" evidence="5">
    <location>
        <begin position="72"/>
        <end position="75"/>
    </location>
</feature>
<feature type="strand" evidence="5">
    <location>
        <begin position="78"/>
        <end position="80"/>
    </location>
</feature>
<feature type="helix" evidence="5">
    <location>
        <begin position="87"/>
        <end position="89"/>
    </location>
</feature>
<feature type="helix" evidence="5">
    <location>
        <begin position="92"/>
        <end position="95"/>
    </location>
</feature>
<feature type="helix" evidence="5">
    <location>
        <begin position="98"/>
        <end position="108"/>
    </location>
</feature>
<feature type="strand" evidence="5">
    <location>
        <begin position="113"/>
        <end position="122"/>
    </location>
</feature>
<feature type="strand" evidence="5">
    <location>
        <begin position="148"/>
        <end position="156"/>
    </location>
</feature>
<feature type="turn" evidence="5">
    <location>
        <begin position="160"/>
        <end position="163"/>
    </location>
</feature>
<feature type="helix" evidence="5">
    <location>
        <begin position="171"/>
        <end position="173"/>
    </location>
</feature>
<feature type="strand" evidence="4">
    <location>
        <begin position="184"/>
        <end position="186"/>
    </location>
</feature>
<feature type="helix" evidence="5">
    <location>
        <begin position="188"/>
        <end position="195"/>
    </location>
</feature>
<feature type="strand" evidence="5">
    <location>
        <begin position="210"/>
        <end position="214"/>
    </location>
</feature>
<feature type="strand" evidence="5">
    <location>
        <begin position="226"/>
        <end position="228"/>
    </location>
</feature>
<feature type="strand" evidence="5">
    <location>
        <begin position="230"/>
        <end position="238"/>
    </location>
</feature>
<feature type="strand" evidence="5">
    <location>
        <begin position="247"/>
        <end position="250"/>
    </location>
</feature>
<feature type="helix" evidence="5">
    <location>
        <begin position="251"/>
        <end position="253"/>
    </location>
</feature>
<feature type="helix" evidence="5">
    <location>
        <begin position="254"/>
        <end position="259"/>
    </location>
</feature>
<feature type="strand" evidence="5">
    <location>
        <begin position="261"/>
        <end position="264"/>
    </location>
</feature>
<feature type="strand" evidence="5">
    <location>
        <begin position="266"/>
        <end position="271"/>
    </location>
</feature>
<feature type="turn" evidence="3">
    <location>
        <begin position="275"/>
        <end position="277"/>
    </location>
</feature>
<organism>
    <name type="scientific">Streptomyces kanamyceticus</name>
    <dbReference type="NCBI Taxonomy" id="1967"/>
    <lineage>
        <taxon>Bacteria</taxon>
        <taxon>Bacillati</taxon>
        <taxon>Actinomycetota</taxon>
        <taxon>Actinomycetes</taxon>
        <taxon>Kitasatosporales</taxon>
        <taxon>Streptomycetaceae</taxon>
        <taxon>Streptomyces</taxon>
    </lineage>
</organism>
<proteinExistence type="evidence at protein level"/>
<protein>
    <recommendedName>
        <fullName>Kanamycin B dioxygenase</fullName>
        <ecNumber>1.14.11.37</ecNumber>
    </recommendedName>
    <alternativeName>
        <fullName>Kanamycin biosynthesis protein J</fullName>
    </alternativeName>
</protein>
<gene>
    <name type="primary">kanJ</name>
    <name type="synonym">kacB</name>
</gene>
<evidence type="ECO:0000269" key="1">
    <source>
    </source>
</evidence>
<evidence type="ECO:0000305" key="2"/>
<evidence type="ECO:0007829" key="3">
    <source>
        <dbReference type="PDB" id="6S0S"/>
    </source>
</evidence>
<evidence type="ECO:0007829" key="4">
    <source>
        <dbReference type="PDB" id="6S0T"/>
    </source>
</evidence>
<evidence type="ECO:0007829" key="5">
    <source>
        <dbReference type="PDB" id="7CL2"/>
    </source>
</evidence>
<name>KANJ_STRKN</name>
<accession>Q6L732</accession>
<dbReference type="EC" id="1.14.11.37"/>
<dbReference type="EMBL" id="AB164642">
    <property type="protein sequence ID" value="BAD20765.1"/>
    <property type="molecule type" value="Genomic_DNA"/>
</dbReference>
<dbReference type="EMBL" id="AJ582817">
    <property type="protein sequence ID" value="CAE46944.1"/>
    <property type="molecule type" value="Genomic_DNA"/>
</dbReference>
<dbReference type="EMBL" id="AJ628422">
    <property type="protein sequence ID" value="CAF31594.2"/>
    <property type="molecule type" value="Genomic_DNA"/>
</dbReference>
<dbReference type="RefSeq" id="WP_055555228.1">
    <property type="nucleotide sequence ID" value="NZ_CP023699.1"/>
</dbReference>
<dbReference type="PDB" id="6S0R">
    <property type="method" value="X-ray"/>
    <property type="resolution" value="2.50 A"/>
    <property type="chains" value="A/B/C/D/E/F=1-285"/>
</dbReference>
<dbReference type="PDB" id="6S0S">
    <property type="method" value="X-ray"/>
    <property type="resolution" value="2.40 A"/>
    <property type="chains" value="A/B/C/D/E/F=1-285"/>
</dbReference>
<dbReference type="PDB" id="6S0T">
    <property type="method" value="X-ray"/>
    <property type="resolution" value="2.10 A"/>
    <property type="chains" value="A/B/C/D/E/F=1-285"/>
</dbReference>
<dbReference type="PDB" id="6S0U">
    <property type="method" value="X-ray"/>
    <property type="resolution" value="2.15 A"/>
    <property type="chains" value="A/B/C/D/E/F=1-277"/>
</dbReference>
<dbReference type="PDB" id="6S0V">
    <property type="method" value="X-ray"/>
    <property type="resolution" value="3.00 A"/>
    <property type="chains" value="A/B/C/D/E/F=1-285"/>
</dbReference>
<dbReference type="PDB" id="6S0W">
    <property type="method" value="X-ray"/>
    <property type="resolution" value="2.36 A"/>
    <property type="chains" value="A/B/C/D/E/F=1-285"/>
</dbReference>
<dbReference type="PDB" id="7CL2">
    <property type="method" value="X-ray"/>
    <property type="resolution" value="2.00 A"/>
    <property type="chains" value="A/B/C/D/E/F=1-285"/>
</dbReference>
<dbReference type="PDB" id="7CL3">
    <property type="method" value="X-ray"/>
    <property type="resolution" value="2.20 A"/>
    <property type="chains" value="A/B/C/D/E/F=1-285"/>
</dbReference>
<dbReference type="PDB" id="7CL4">
    <property type="method" value="X-ray"/>
    <property type="resolution" value="2.25 A"/>
    <property type="chains" value="A/B/C/D/E/F=1-285"/>
</dbReference>
<dbReference type="PDB" id="7CL5">
    <property type="method" value="X-ray"/>
    <property type="resolution" value="2.50 A"/>
    <property type="chains" value="A/B/C/D/E/F=1-285"/>
</dbReference>
<dbReference type="PDB" id="7CL6">
    <property type="method" value="X-ray"/>
    <property type="resolution" value="2.44 A"/>
    <property type="chains" value="A/B/C/D/E/F=1-285"/>
</dbReference>
<dbReference type="PDBsum" id="6S0R"/>
<dbReference type="PDBsum" id="6S0S"/>
<dbReference type="PDBsum" id="6S0T"/>
<dbReference type="PDBsum" id="6S0U"/>
<dbReference type="PDBsum" id="6S0V"/>
<dbReference type="PDBsum" id="6S0W"/>
<dbReference type="PDBsum" id="7CL2"/>
<dbReference type="PDBsum" id="7CL3"/>
<dbReference type="PDBsum" id="7CL4"/>
<dbReference type="PDBsum" id="7CL5"/>
<dbReference type="PDBsum" id="7CL6"/>
<dbReference type="SMR" id="Q6L732"/>
<dbReference type="KEGG" id="ag:BAD20765"/>
<dbReference type="OrthoDB" id="9796766at2"/>
<dbReference type="BioCyc" id="MetaCyc:MONOMER-17980"/>
<dbReference type="BRENDA" id="1.14.11.37">
    <property type="organism ID" value="6046"/>
</dbReference>
<dbReference type="UniPathway" id="UPA00965"/>
<dbReference type="GO" id="GO:0016706">
    <property type="term" value="F:2-oxoglutarate-dependent dioxygenase activity"/>
    <property type="evidence" value="ECO:0000314"/>
    <property type="project" value="UniProtKB"/>
</dbReference>
<dbReference type="GO" id="GO:1901133">
    <property type="term" value="P:kanamycin biosynthetic process"/>
    <property type="evidence" value="ECO:0000314"/>
    <property type="project" value="UniProtKB"/>
</dbReference>
<dbReference type="Gene3D" id="2.60.120.620">
    <property type="entry name" value="q2cbj1_9rhob like domain"/>
    <property type="match status" value="1"/>
</dbReference>
<dbReference type="InterPro" id="IPR051961">
    <property type="entry name" value="Fungal_Metabolite_Diox"/>
</dbReference>
<dbReference type="InterPro" id="IPR008775">
    <property type="entry name" value="Phytyl_CoA_dOase-like"/>
</dbReference>
<dbReference type="PANTHER" id="PTHR37563">
    <property type="entry name" value="PHYTANOYL-COA DIOXYGENASE FAMILY PROTEIN (AFU_ORTHOLOGUE AFUA_2G03330)"/>
    <property type="match status" value="1"/>
</dbReference>
<dbReference type="PANTHER" id="PTHR37563:SF2">
    <property type="entry name" value="PHYTANOYL-COA DIOXYGENASE FAMILY PROTEIN (AFU_ORTHOLOGUE AFUA_2G03330)"/>
    <property type="match status" value="1"/>
</dbReference>
<dbReference type="Pfam" id="PF05721">
    <property type="entry name" value="PhyH"/>
    <property type="match status" value="1"/>
</dbReference>
<dbReference type="SUPFAM" id="SSF51197">
    <property type="entry name" value="Clavaminate synthase-like"/>
    <property type="match status" value="1"/>
</dbReference>
<sequence length="285" mass="31534">MALAAPPGELTLALTPDDKTLDPASLDRALAILAEHGILVLTGMLRTRLTDQLRTAMLDDLPEVLRQQDVPTNFVPGHVQQDPPVRESLLFPDVLLNPVVYQITHAVLGADARNAVYSGNMNLPGSHEQPVHLDEPHLWPGISHPPYCLCVDVPLIDFTLENGSTEYWPGSHVLNPDECYDERGCVLPAELERRRAVAPPVRFPIPVGSVVIRDGRLWHRGVPNLSAAPRPLLAMTHYTEWFDMPPIQLPDTVKSWVDGSDRHTHAHFVAGDVDHLTGDHPFAVR</sequence>